<proteinExistence type="inferred from homology"/>
<evidence type="ECO:0000255" key="1">
    <source>
        <dbReference type="HAMAP-Rule" id="MF_01077"/>
    </source>
</evidence>
<dbReference type="EMBL" id="CP000058">
    <property type="protein sequence ID" value="AAZ33687.1"/>
    <property type="molecule type" value="Genomic_DNA"/>
</dbReference>
<dbReference type="SMR" id="Q48E75"/>
<dbReference type="KEGG" id="psp:PSPPH_4191"/>
<dbReference type="eggNOG" id="COG0779">
    <property type="taxonomic scope" value="Bacteria"/>
</dbReference>
<dbReference type="HOGENOM" id="CLU_070525_1_1_6"/>
<dbReference type="Proteomes" id="UP000000551">
    <property type="component" value="Chromosome"/>
</dbReference>
<dbReference type="GO" id="GO:0005829">
    <property type="term" value="C:cytosol"/>
    <property type="evidence" value="ECO:0007669"/>
    <property type="project" value="TreeGrafter"/>
</dbReference>
<dbReference type="GO" id="GO:0000028">
    <property type="term" value="P:ribosomal small subunit assembly"/>
    <property type="evidence" value="ECO:0007669"/>
    <property type="project" value="TreeGrafter"/>
</dbReference>
<dbReference type="GO" id="GO:0006412">
    <property type="term" value="P:translation"/>
    <property type="evidence" value="ECO:0007669"/>
    <property type="project" value="TreeGrafter"/>
</dbReference>
<dbReference type="CDD" id="cd01734">
    <property type="entry name" value="YlxS_C"/>
    <property type="match status" value="1"/>
</dbReference>
<dbReference type="FunFam" id="3.30.300.70:FF:000001">
    <property type="entry name" value="Ribosome maturation factor RimP"/>
    <property type="match status" value="1"/>
</dbReference>
<dbReference type="Gene3D" id="2.30.30.180">
    <property type="entry name" value="Ribosome maturation factor RimP, C-terminal domain"/>
    <property type="match status" value="1"/>
</dbReference>
<dbReference type="Gene3D" id="3.30.300.70">
    <property type="entry name" value="RimP-like superfamily, N-terminal"/>
    <property type="match status" value="1"/>
</dbReference>
<dbReference type="HAMAP" id="MF_01077">
    <property type="entry name" value="RimP"/>
    <property type="match status" value="1"/>
</dbReference>
<dbReference type="InterPro" id="IPR003728">
    <property type="entry name" value="Ribosome_maturation_RimP"/>
</dbReference>
<dbReference type="InterPro" id="IPR028998">
    <property type="entry name" value="RimP_C"/>
</dbReference>
<dbReference type="InterPro" id="IPR036847">
    <property type="entry name" value="RimP_C_sf"/>
</dbReference>
<dbReference type="InterPro" id="IPR028989">
    <property type="entry name" value="RimP_N"/>
</dbReference>
<dbReference type="InterPro" id="IPR035956">
    <property type="entry name" value="RimP_N_sf"/>
</dbReference>
<dbReference type="NCBIfam" id="NF000927">
    <property type="entry name" value="PRK00092.1-1"/>
    <property type="match status" value="1"/>
</dbReference>
<dbReference type="PANTHER" id="PTHR33867">
    <property type="entry name" value="RIBOSOME MATURATION FACTOR RIMP"/>
    <property type="match status" value="1"/>
</dbReference>
<dbReference type="PANTHER" id="PTHR33867:SF1">
    <property type="entry name" value="RIBOSOME MATURATION FACTOR RIMP"/>
    <property type="match status" value="1"/>
</dbReference>
<dbReference type="Pfam" id="PF17384">
    <property type="entry name" value="DUF150_C"/>
    <property type="match status" value="1"/>
</dbReference>
<dbReference type="Pfam" id="PF02576">
    <property type="entry name" value="RimP_N"/>
    <property type="match status" value="1"/>
</dbReference>
<dbReference type="SUPFAM" id="SSF74942">
    <property type="entry name" value="YhbC-like, C-terminal domain"/>
    <property type="match status" value="1"/>
</dbReference>
<dbReference type="SUPFAM" id="SSF75420">
    <property type="entry name" value="YhbC-like, N-terminal domain"/>
    <property type="match status" value="1"/>
</dbReference>
<keyword id="KW-0963">Cytoplasm</keyword>
<keyword id="KW-0690">Ribosome biogenesis</keyword>
<gene>
    <name evidence="1" type="primary">rimP</name>
    <name type="ordered locus">PSPPH_4191</name>
</gene>
<sequence length="158" mass="17667">MHEGVQVSSKLEQLQDLLAPVVVALGYQCWGIDFSSQGKHSVLRIYIDKEGGVLVDDCAIVSRQISGVLDVEDPISTEYTLEVSSPGMERPLFTIEQFASYAGEQVKIKLRSPFEGRRNFQGLLRGVEEQDVVVQVEDHEFLLPIDMIDKANIIPTFD</sequence>
<feature type="chain" id="PRO_0000229267" description="Ribosome maturation factor RimP">
    <location>
        <begin position="1"/>
        <end position="158"/>
    </location>
</feature>
<comment type="function">
    <text evidence="1">Required for maturation of 30S ribosomal subunits.</text>
</comment>
<comment type="subcellular location">
    <subcellularLocation>
        <location evidence="1">Cytoplasm</location>
    </subcellularLocation>
</comment>
<comment type="similarity">
    <text evidence="1">Belongs to the RimP family.</text>
</comment>
<accession>Q48E75</accession>
<organism>
    <name type="scientific">Pseudomonas savastanoi pv. phaseolicola (strain 1448A / Race 6)</name>
    <name type="common">Pseudomonas syringae pv. phaseolicola (strain 1448A / Race 6)</name>
    <dbReference type="NCBI Taxonomy" id="264730"/>
    <lineage>
        <taxon>Bacteria</taxon>
        <taxon>Pseudomonadati</taxon>
        <taxon>Pseudomonadota</taxon>
        <taxon>Gammaproteobacteria</taxon>
        <taxon>Pseudomonadales</taxon>
        <taxon>Pseudomonadaceae</taxon>
        <taxon>Pseudomonas</taxon>
    </lineage>
</organism>
<reference key="1">
    <citation type="journal article" date="2005" name="J. Bacteriol.">
        <title>Whole-genome sequence analysis of Pseudomonas syringae pv. phaseolicola 1448A reveals divergence among pathovars in genes involved in virulence and transposition.</title>
        <authorList>
            <person name="Joardar V."/>
            <person name="Lindeberg M."/>
            <person name="Jackson R.W."/>
            <person name="Selengut J."/>
            <person name="Dodson R."/>
            <person name="Brinkac L.M."/>
            <person name="Daugherty S.C."/>
            <person name="DeBoy R.T."/>
            <person name="Durkin A.S."/>
            <person name="Gwinn Giglio M."/>
            <person name="Madupu R."/>
            <person name="Nelson W.C."/>
            <person name="Rosovitz M.J."/>
            <person name="Sullivan S.A."/>
            <person name="Crabtree J."/>
            <person name="Creasy T."/>
            <person name="Davidsen T.M."/>
            <person name="Haft D.H."/>
            <person name="Zafar N."/>
            <person name="Zhou L."/>
            <person name="Halpin R."/>
            <person name="Holley T."/>
            <person name="Khouri H.M."/>
            <person name="Feldblyum T.V."/>
            <person name="White O."/>
            <person name="Fraser C.M."/>
            <person name="Chatterjee A.K."/>
            <person name="Cartinhour S."/>
            <person name="Schneider D."/>
            <person name="Mansfield J.W."/>
            <person name="Collmer A."/>
            <person name="Buell R."/>
        </authorList>
    </citation>
    <scope>NUCLEOTIDE SEQUENCE [LARGE SCALE GENOMIC DNA]</scope>
    <source>
        <strain>1448A / Race 6</strain>
    </source>
</reference>
<name>RIMP_PSE14</name>
<protein>
    <recommendedName>
        <fullName evidence="1">Ribosome maturation factor RimP</fullName>
    </recommendedName>
</protein>